<comment type="function">
    <text evidence="1">Phosphorylation of dTMP to form dTDP in both de novo and salvage pathways of dTTP synthesis.</text>
</comment>
<comment type="catalytic activity">
    <reaction evidence="1">
        <text>dTMP + ATP = dTDP + ADP</text>
        <dbReference type="Rhea" id="RHEA:13517"/>
        <dbReference type="ChEBI" id="CHEBI:30616"/>
        <dbReference type="ChEBI" id="CHEBI:58369"/>
        <dbReference type="ChEBI" id="CHEBI:63528"/>
        <dbReference type="ChEBI" id="CHEBI:456216"/>
        <dbReference type="EC" id="2.7.4.9"/>
    </reaction>
</comment>
<comment type="similarity">
    <text evidence="1">Belongs to the thymidylate kinase family.</text>
</comment>
<feature type="chain" id="PRO_1000123592" description="Thymidylate kinase">
    <location>
        <begin position="1"/>
        <end position="211"/>
    </location>
</feature>
<feature type="binding site" evidence="1">
    <location>
        <begin position="11"/>
        <end position="18"/>
    </location>
    <ligand>
        <name>ATP</name>
        <dbReference type="ChEBI" id="CHEBI:30616"/>
    </ligand>
</feature>
<accession>B9DTV7</accession>
<sequence length="211" mass="23709">MTKGKIITLEGPDGAGKTSVLEQLVLKLEKDNEQSIVTTREPGGVAISESIRNIILDVNNTEMDFKTELLLYIAARRQHLVEKVLPSLSAGKLVFIDRFIDSSVAYQGEGRGLNKSDIEWLNDFATDGIKPDLTLLFDVPSEIGIARINQNVNREINRLDLEKLEMHQKVRQGYLELAKANPDRIVLIDASKPLDDVVDEAYRVIKERFAH</sequence>
<keyword id="KW-0067">ATP-binding</keyword>
<keyword id="KW-0418">Kinase</keyword>
<keyword id="KW-0545">Nucleotide biosynthesis</keyword>
<keyword id="KW-0547">Nucleotide-binding</keyword>
<keyword id="KW-1185">Reference proteome</keyword>
<keyword id="KW-0808">Transferase</keyword>
<organism>
    <name type="scientific">Streptococcus uberis (strain ATCC BAA-854 / 0140J)</name>
    <dbReference type="NCBI Taxonomy" id="218495"/>
    <lineage>
        <taxon>Bacteria</taxon>
        <taxon>Bacillati</taxon>
        <taxon>Bacillota</taxon>
        <taxon>Bacilli</taxon>
        <taxon>Lactobacillales</taxon>
        <taxon>Streptococcaceae</taxon>
        <taxon>Streptococcus</taxon>
    </lineage>
</organism>
<protein>
    <recommendedName>
        <fullName evidence="1">Thymidylate kinase</fullName>
        <ecNumber evidence="1">2.7.4.9</ecNumber>
    </recommendedName>
    <alternativeName>
        <fullName evidence="1">dTMP kinase</fullName>
    </alternativeName>
</protein>
<gene>
    <name evidence="1" type="primary">tmk</name>
    <name type="ordered locus">SUB0438</name>
</gene>
<proteinExistence type="inferred from homology"/>
<dbReference type="EC" id="2.7.4.9" evidence="1"/>
<dbReference type="EMBL" id="AM946015">
    <property type="protein sequence ID" value="CAR41106.1"/>
    <property type="molecule type" value="Genomic_DNA"/>
</dbReference>
<dbReference type="RefSeq" id="WP_012657973.1">
    <property type="nucleotide sequence ID" value="NC_012004.1"/>
</dbReference>
<dbReference type="SMR" id="B9DTV7"/>
<dbReference type="STRING" id="218495.SUB0438"/>
<dbReference type="GeneID" id="93825740"/>
<dbReference type="KEGG" id="sub:SUB0438"/>
<dbReference type="eggNOG" id="COG0125">
    <property type="taxonomic scope" value="Bacteria"/>
</dbReference>
<dbReference type="HOGENOM" id="CLU_049131_0_2_9"/>
<dbReference type="OrthoDB" id="9774907at2"/>
<dbReference type="Proteomes" id="UP000000449">
    <property type="component" value="Chromosome"/>
</dbReference>
<dbReference type="GO" id="GO:0005829">
    <property type="term" value="C:cytosol"/>
    <property type="evidence" value="ECO:0007669"/>
    <property type="project" value="TreeGrafter"/>
</dbReference>
<dbReference type="GO" id="GO:0005524">
    <property type="term" value="F:ATP binding"/>
    <property type="evidence" value="ECO:0007669"/>
    <property type="project" value="UniProtKB-UniRule"/>
</dbReference>
<dbReference type="GO" id="GO:0004798">
    <property type="term" value="F:dTMP kinase activity"/>
    <property type="evidence" value="ECO:0007669"/>
    <property type="project" value="UniProtKB-UniRule"/>
</dbReference>
<dbReference type="GO" id="GO:0006233">
    <property type="term" value="P:dTDP biosynthetic process"/>
    <property type="evidence" value="ECO:0007669"/>
    <property type="project" value="InterPro"/>
</dbReference>
<dbReference type="GO" id="GO:0006235">
    <property type="term" value="P:dTTP biosynthetic process"/>
    <property type="evidence" value="ECO:0007669"/>
    <property type="project" value="UniProtKB-UniRule"/>
</dbReference>
<dbReference type="GO" id="GO:0006227">
    <property type="term" value="P:dUDP biosynthetic process"/>
    <property type="evidence" value="ECO:0007669"/>
    <property type="project" value="TreeGrafter"/>
</dbReference>
<dbReference type="CDD" id="cd01672">
    <property type="entry name" value="TMPK"/>
    <property type="match status" value="1"/>
</dbReference>
<dbReference type="FunFam" id="3.40.50.300:FF:000225">
    <property type="entry name" value="Thymidylate kinase"/>
    <property type="match status" value="1"/>
</dbReference>
<dbReference type="Gene3D" id="3.40.50.300">
    <property type="entry name" value="P-loop containing nucleotide triphosphate hydrolases"/>
    <property type="match status" value="1"/>
</dbReference>
<dbReference type="HAMAP" id="MF_00165">
    <property type="entry name" value="Thymidylate_kinase"/>
    <property type="match status" value="1"/>
</dbReference>
<dbReference type="InterPro" id="IPR027417">
    <property type="entry name" value="P-loop_NTPase"/>
</dbReference>
<dbReference type="InterPro" id="IPR039430">
    <property type="entry name" value="Thymidylate_kin-like_dom"/>
</dbReference>
<dbReference type="InterPro" id="IPR018094">
    <property type="entry name" value="Thymidylate_kinase"/>
</dbReference>
<dbReference type="NCBIfam" id="TIGR00041">
    <property type="entry name" value="DTMP_kinase"/>
    <property type="match status" value="1"/>
</dbReference>
<dbReference type="PANTHER" id="PTHR10344">
    <property type="entry name" value="THYMIDYLATE KINASE"/>
    <property type="match status" value="1"/>
</dbReference>
<dbReference type="PANTHER" id="PTHR10344:SF4">
    <property type="entry name" value="UMP-CMP KINASE 2, MITOCHONDRIAL"/>
    <property type="match status" value="1"/>
</dbReference>
<dbReference type="Pfam" id="PF02223">
    <property type="entry name" value="Thymidylate_kin"/>
    <property type="match status" value="1"/>
</dbReference>
<dbReference type="SUPFAM" id="SSF52540">
    <property type="entry name" value="P-loop containing nucleoside triphosphate hydrolases"/>
    <property type="match status" value="1"/>
</dbReference>
<evidence type="ECO:0000255" key="1">
    <source>
        <dbReference type="HAMAP-Rule" id="MF_00165"/>
    </source>
</evidence>
<name>KTHY_STRU0</name>
<reference key="1">
    <citation type="journal article" date="2009" name="BMC Genomics">
        <title>Evidence for niche adaptation in the genome of the bovine pathogen Streptococcus uberis.</title>
        <authorList>
            <person name="Ward P.N."/>
            <person name="Holden M.T.G."/>
            <person name="Leigh J.A."/>
            <person name="Lennard N."/>
            <person name="Bignell A."/>
            <person name="Barron A."/>
            <person name="Clark L."/>
            <person name="Quail M.A."/>
            <person name="Woodward J."/>
            <person name="Barrell B.G."/>
            <person name="Egan S.A."/>
            <person name="Field T.R."/>
            <person name="Maskell D."/>
            <person name="Kehoe M."/>
            <person name="Dowson C.G."/>
            <person name="Chanter N."/>
            <person name="Whatmore A.M."/>
            <person name="Bentley S.D."/>
            <person name="Parkhill J."/>
        </authorList>
    </citation>
    <scope>NUCLEOTIDE SEQUENCE [LARGE SCALE GENOMIC DNA]</scope>
    <source>
        <strain>ATCC BAA-854 / 0140J</strain>
    </source>
</reference>